<feature type="chain" id="PRO_0000073521" description="Calcium-binding protein 4">
    <location>
        <begin position="1"/>
        <end position="275"/>
    </location>
</feature>
<feature type="domain" description="EF-hand 1" evidence="3">
    <location>
        <begin position="129"/>
        <end position="164"/>
    </location>
</feature>
<feature type="domain" description="EF-hand 2" evidence="3">
    <location>
        <begin position="183"/>
        <end position="200"/>
    </location>
</feature>
<feature type="domain" description="EF-hand 3" evidence="3">
    <location>
        <begin position="206"/>
        <end position="241"/>
    </location>
</feature>
<feature type="domain" description="EF-hand 4" evidence="3">
    <location>
        <begin position="243"/>
        <end position="275"/>
    </location>
</feature>
<feature type="region of interest" description="Disordered" evidence="4">
    <location>
        <begin position="1"/>
        <end position="112"/>
    </location>
</feature>
<feature type="compositionally biased region" description="Polar residues" evidence="4">
    <location>
        <begin position="1"/>
        <end position="12"/>
    </location>
</feature>
<feature type="compositionally biased region" description="Basic residues" evidence="4">
    <location>
        <begin position="38"/>
        <end position="55"/>
    </location>
</feature>
<feature type="binding site" evidence="3">
    <location>
        <position position="142"/>
    </location>
    <ligand>
        <name>Ca(2+)</name>
        <dbReference type="ChEBI" id="CHEBI:29108"/>
        <label>1</label>
    </ligand>
</feature>
<feature type="binding site" evidence="3">
    <location>
        <position position="144"/>
    </location>
    <ligand>
        <name>Ca(2+)</name>
        <dbReference type="ChEBI" id="CHEBI:29108"/>
        <label>1</label>
    </ligand>
</feature>
<feature type="binding site" evidence="3">
    <location>
        <position position="146"/>
    </location>
    <ligand>
        <name>Ca(2+)</name>
        <dbReference type="ChEBI" id="CHEBI:29108"/>
        <label>1</label>
    </ligand>
</feature>
<feature type="binding site" evidence="3">
    <location>
        <position position="148"/>
    </location>
    <ligand>
        <name>Ca(2+)</name>
        <dbReference type="ChEBI" id="CHEBI:29108"/>
        <label>1</label>
    </ligand>
</feature>
<feature type="binding site" evidence="3">
    <location>
        <position position="153"/>
    </location>
    <ligand>
        <name>Ca(2+)</name>
        <dbReference type="ChEBI" id="CHEBI:29108"/>
        <label>1</label>
    </ligand>
</feature>
<feature type="binding site" evidence="3">
    <location>
        <position position="219"/>
    </location>
    <ligand>
        <name>Ca(2+)</name>
        <dbReference type="ChEBI" id="CHEBI:29108"/>
        <label>2</label>
    </ligand>
</feature>
<feature type="binding site" evidence="3">
    <location>
        <position position="221"/>
    </location>
    <ligand>
        <name>Ca(2+)</name>
        <dbReference type="ChEBI" id="CHEBI:29108"/>
        <label>2</label>
    </ligand>
</feature>
<feature type="binding site" evidence="3">
    <location>
        <position position="223"/>
    </location>
    <ligand>
        <name>Ca(2+)</name>
        <dbReference type="ChEBI" id="CHEBI:29108"/>
        <label>2</label>
    </ligand>
</feature>
<feature type="binding site" evidence="3">
    <location>
        <position position="225"/>
    </location>
    <ligand>
        <name>Ca(2+)</name>
        <dbReference type="ChEBI" id="CHEBI:29108"/>
        <label>2</label>
    </ligand>
</feature>
<feature type="binding site" evidence="3">
    <location>
        <position position="230"/>
    </location>
    <ligand>
        <name>Ca(2+)</name>
        <dbReference type="ChEBI" id="CHEBI:29108"/>
        <label>2</label>
    </ligand>
</feature>
<feature type="binding site" evidence="3">
    <location>
        <position position="256"/>
    </location>
    <ligand>
        <name>Ca(2+)</name>
        <dbReference type="ChEBI" id="CHEBI:29108"/>
        <label>3</label>
    </ligand>
</feature>
<feature type="binding site" evidence="3">
    <location>
        <position position="258"/>
    </location>
    <ligand>
        <name>Ca(2+)</name>
        <dbReference type="ChEBI" id="CHEBI:29108"/>
        <label>3</label>
    </ligand>
</feature>
<feature type="binding site" evidence="3">
    <location>
        <position position="260"/>
    </location>
    <ligand>
        <name>Ca(2+)</name>
        <dbReference type="ChEBI" id="CHEBI:29108"/>
        <label>3</label>
    </ligand>
</feature>
<feature type="binding site" evidence="3">
    <location>
        <position position="262"/>
    </location>
    <ligand>
        <name>Ca(2+)</name>
        <dbReference type="ChEBI" id="CHEBI:29108"/>
        <label>3</label>
    </ligand>
</feature>
<feature type="binding site" evidence="3">
    <location>
        <position position="267"/>
    </location>
    <ligand>
        <name>Ca(2+)</name>
        <dbReference type="ChEBI" id="CHEBI:29108"/>
        <label>3</label>
    </ligand>
</feature>
<feature type="modified residue" description="Phosphoserine" evidence="2">
    <location>
        <position position="42"/>
    </location>
</feature>
<feature type="splice variant" id="VSP_012700" description="In isoform 2." evidence="7">
    <location>
        <begin position="1"/>
        <end position="105"/>
    </location>
</feature>
<feature type="splice variant" id="VSP_012701" description="In isoform 2." evidence="7">
    <original>DAAQRTYGPLLNRVFGK</original>
    <variation>MTEPWLALGTSWTLPLQ</variation>
    <location>
        <begin position="106"/>
        <end position="122"/>
    </location>
</feature>
<feature type="sequence variant" id="VAR_029375" description="In CRSD; dbSNP:rs121917828." evidence="5">
    <original>R</original>
    <variation>C</variation>
    <location>
        <position position="124"/>
    </location>
</feature>
<name>CABP4_HUMAN</name>
<proteinExistence type="evidence at protein level"/>
<protein>
    <recommendedName>
        <fullName>Calcium-binding protein 4</fullName>
        <shortName>CaBP4</shortName>
    </recommendedName>
</protein>
<comment type="function">
    <text evidence="1">Involved in normal synaptic function through regulation of Ca(2+) influx and neurotransmitter release in photoreceptor synaptic terminals and in auditory transmission. Modulator of CACNA1D and CACNA1F, suppressing the calcium-dependent inactivation and shifting the activation range to more hyperpolarized voltages (By similarity).</text>
</comment>
<comment type="subunit">
    <text evidence="1">Interacts with CACNA1F and CACNA1D (via IQ domain) in a calcium independent manner. Interacts (via N-terminus) with UNC119.</text>
</comment>
<comment type="subcellular location">
    <subcellularLocation>
        <location evidence="6">Cytoplasm</location>
    </subcellularLocation>
    <subcellularLocation>
        <location evidence="2">Presynapse</location>
    </subcellularLocation>
    <text evidence="2">Found in rod spherules and cone pedicles of the presynapses from both types of photoreceptors.</text>
</comment>
<comment type="alternative products">
    <event type="alternative splicing"/>
    <isoform>
        <id>P57796-1</id>
        <name>1</name>
        <sequence type="displayed"/>
    </isoform>
    <isoform>
        <id>P57796-2</id>
        <name>2</name>
        <sequence type="described" ref="VSP_012700 VSP_012701"/>
    </isoform>
</comment>
<comment type="tissue specificity">
    <text>Expressed in retina and in the inner hair cells (IHC) of the cochlea.</text>
</comment>
<comment type="PTM">
    <text evidence="1">Phosphorylated. Phosphorylation levels change with the light conditions and regulate the activity (By similarity).</text>
</comment>
<comment type="disease" evidence="5">
    <disease id="DI-00378">
        <name>Cone-rod synaptic disorder, congenital non-progressive</name>
        <acronym>CRSD</acronym>
        <description>A non-progressive retinal disorder characterized by stable low vision, nystagmus, photophobia, a normal or near-normal fundus appearance, and no night blindness.</description>
        <dbReference type="MIM" id="610427"/>
    </disease>
    <text>The disease is caused by variants affecting the gene represented in this entry.</text>
</comment>
<organism>
    <name type="scientific">Homo sapiens</name>
    <name type="common">Human</name>
    <dbReference type="NCBI Taxonomy" id="9606"/>
    <lineage>
        <taxon>Eukaryota</taxon>
        <taxon>Metazoa</taxon>
        <taxon>Chordata</taxon>
        <taxon>Craniata</taxon>
        <taxon>Vertebrata</taxon>
        <taxon>Euteleostomi</taxon>
        <taxon>Mammalia</taxon>
        <taxon>Eutheria</taxon>
        <taxon>Euarchontoglires</taxon>
        <taxon>Primates</taxon>
        <taxon>Haplorrhini</taxon>
        <taxon>Catarrhini</taxon>
        <taxon>Hominidae</taxon>
        <taxon>Homo</taxon>
    </lineage>
</organism>
<gene>
    <name type="primary">CABP4</name>
</gene>
<reference key="1">
    <citation type="journal article" date="2004" name="Nat. Neurosci.">
        <title>Essential role of Ca2+-binding protein 4, a Cav1.4 channel regulator, in photoreceptor synaptic function.</title>
        <authorList>
            <person name="Haeseleer F."/>
            <person name="Imanishi Y."/>
            <person name="Maeda T."/>
            <person name="Possin D.E."/>
            <person name="Maeda A."/>
            <person name="Lee A."/>
            <person name="Rieke F."/>
            <person name="Palczewski K."/>
        </authorList>
    </citation>
    <scope>NUCLEOTIDE SEQUENCE [MRNA] (ISOFORM 1)</scope>
    <source>
        <tissue>Retina</tissue>
    </source>
</reference>
<reference key="2">
    <citation type="journal article" date="2006" name="Nature">
        <title>Human chromosome 11 DNA sequence and analysis including novel gene identification.</title>
        <authorList>
            <person name="Taylor T.D."/>
            <person name="Noguchi H."/>
            <person name="Totoki Y."/>
            <person name="Toyoda A."/>
            <person name="Kuroki Y."/>
            <person name="Dewar K."/>
            <person name="Lloyd C."/>
            <person name="Itoh T."/>
            <person name="Takeda T."/>
            <person name="Kim D.-W."/>
            <person name="She X."/>
            <person name="Barlow K.F."/>
            <person name="Bloom T."/>
            <person name="Bruford E."/>
            <person name="Chang J.L."/>
            <person name="Cuomo C.A."/>
            <person name="Eichler E."/>
            <person name="FitzGerald M.G."/>
            <person name="Jaffe D.B."/>
            <person name="LaButti K."/>
            <person name="Nicol R."/>
            <person name="Park H.-S."/>
            <person name="Seaman C."/>
            <person name="Sougnez C."/>
            <person name="Yang X."/>
            <person name="Zimmer A.R."/>
            <person name="Zody M.C."/>
            <person name="Birren B.W."/>
            <person name="Nusbaum C."/>
            <person name="Fujiyama A."/>
            <person name="Hattori M."/>
            <person name="Rogers J."/>
            <person name="Lander E.S."/>
            <person name="Sakaki Y."/>
        </authorList>
    </citation>
    <scope>NUCLEOTIDE SEQUENCE [LARGE SCALE GENOMIC DNA]</scope>
</reference>
<reference key="3">
    <citation type="journal article" date="2004" name="Genome Res.">
        <title>The status, quality, and expansion of the NIH full-length cDNA project: the Mammalian Gene Collection (MGC).</title>
        <authorList>
            <consortium name="The MGC Project Team"/>
        </authorList>
    </citation>
    <scope>NUCLEOTIDE SEQUENCE [LARGE SCALE MRNA] (ISOFORM 2)</scope>
    <source>
        <tissue>Lung</tissue>
    </source>
</reference>
<reference key="4">
    <citation type="journal article" date="2000" name="J. Biol. Chem.">
        <title>Five members of a novel Ca(2+)-binding protein (CABP) subfamily with similarity to calmodulin.</title>
        <authorList>
            <person name="Haeseleer F."/>
            <person name="Sokal I."/>
            <person name="Verlinde C.L.M.J."/>
            <person name="Erdjument-Bromage H."/>
            <person name="Tempst P."/>
            <person name="Pronin A.N."/>
            <person name="Benovic J.L."/>
            <person name="Fariss R.N."/>
            <person name="Palczewski K."/>
        </authorList>
    </citation>
    <scope>IDENTIFICATION</scope>
</reference>
<reference key="5">
    <citation type="journal article" date="2009" name="Biochem. Biophys. Res. Commun.">
        <title>Membrane targeting of the EF-hand containing calcium-sensing proteins CaBP7 and CaBP8.</title>
        <authorList>
            <person name="McCue H.V."/>
            <person name="Burgoyne R.D."/>
            <person name="Haynes L.P."/>
        </authorList>
    </citation>
    <scope>SUBCELLULAR LOCATION</scope>
</reference>
<reference key="6">
    <citation type="journal article" date="2006" name="Am. J. Hum. Genet.">
        <title>Mutations in CABP4, the gene encoding the Ca2+-binding protein 4, cause autosomal recessive night blindness.</title>
        <authorList>
            <person name="Zeitz C."/>
            <person name="Kloeckener-Gruissem B."/>
            <person name="Forster U."/>
            <person name="Kohl S."/>
            <person name="Magyar I."/>
            <person name="Wissinger B."/>
            <person name="Matyas G."/>
            <person name="Borruat F.-X."/>
            <person name="Schorderet D.F."/>
            <person name="Zrenner E."/>
            <person name="Munier F.L."/>
            <person name="Berger W."/>
        </authorList>
    </citation>
    <scope>VARIANT CRSD CYS-124</scope>
</reference>
<sequence length="275" mass="30433">MTTEQARGQQGPNLAIGRQKPPAGVVTPKSDAEEPPLTRKRSKKERGLRGSRKRTGSSGEQTGPEAPGSSNNPPSTGEGPAGAPPASPGPASSRQSHRHRPDSLHDAAQRTYGPLLNRVFGKDRELGPEELDELQAAFEEFDTDRDGYISHRELGDCMRTLGYMPTEMELLEVSQHIKMRMGGRVDFEEFVELIGPKLREETAHMLGVRELRIAFREFDRDRDGRITVAELREAVPALLGEPLAGPELDEMLREVDLNGDGTVDFDEFVMMLSRH</sequence>
<accession>P57796</accession>
<accession>Q8N4Z2</accession>
<accession>Q8WWY5</accession>
<dbReference type="EMBL" id="AY039217">
    <property type="protein sequence ID" value="AAK83462.1"/>
    <property type="molecule type" value="mRNA"/>
</dbReference>
<dbReference type="EMBL" id="AC005849">
    <property type="status" value="NOT_ANNOTATED_CDS"/>
    <property type="molecule type" value="Genomic_DNA"/>
</dbReference>
<dbReference type="EMBL" id="BC033167">
    <property type="protein sequence ID" value="AAH33167.1"/>
    <property type="molecule type" value="mRNA"/>
</dbReference>
<dbReference type="CCDS" id="CCDS73333.1">
    <molecule id="P57796-2"/>
</dbReference>
<dbReference type="CCDS" id="CCDS8166.1">
    <molecule id="P57796-1"/>
</dbReference>
<dbReference type="RefSeq" id="NP_001287824.1">
    <molecule id="P57796-2"/>
    <property type="nucleotide sequence ID" value="NM_001300895.3"/>
</dbReference>
<dbReference type="RefSeq" id="NP_001287825.1">
    <molecule id="P57796-2"/>
    <property type="nucleotide sequence ID" value="NM_001300896.3"/>
</dbReference>
<dbReference type="RefSeq" id="NP_001366112.1">
    <molecule id="P57796-2"/>
    <property type="nucleotide sequence ID" value="NM_001379183.1"/>
</dbReference>
<dbReference type="RefSeq" id="NP_660201.1">
    <molecule id="P57796-1"/>
    <property type="nucleotide sequence ID" value="NM_145200.5"/>
</dbReference>
<dbReference type="RefSeq" id="XP_011543485.1">
    <property type="nucleotide sequence ID" value="XM_011545183.2"/>
</dbReference>
<dbReference type="RefSeq" id="XP_016873514.1">
    <property type="nucleotide sequence ID" value="XM_017018025.1"/>
</dbReference>
<dbReference type="RefSeq" id="XP_024304383.1">
    <molecule id="P57796-1"/>
    <property type="nucleotide sequence ID" value="XM_024448615.2"/>
</dbReference>
<dbReference type="SMR" id="P57796"/>
<dbReference type="BioGRID" id="121324">
    <property type="interactions" value="11"/>
</dbReference>
<dbReference type="FunCoup" id="P57796">
    <property type="interactions" value="3"/>
</dbReference>
<dbReference type="IntAct" id="P57796">
    <property type="interactions" value="8"/>
</dbReference>
<dbReference type="STRING" id="9606.ENSP00000324960"/>
<dbReference type="iPTMnet" id="P57796"/>
<dbReference type="PhosphoSitePlus" id="P57796"/>
<dbReference type="BioMuta" id="CABP4"/>
<dbReference type="DMDM" id="20178284"/>
<dbReference type="MassIVE" id="P57796"/>
<dbReference type="PaxDb" id="9606-ENSP00000324960"/>
<dbReference type="PeptideAtlas" id="P57796"/>
<dbReference type="ProteomicsDB" id="57041">
    <molecule id="P57796-1"/>
</dbReference>
<dbReference type="ProteomicsDB" id="57042">
    <molecule id="P57796-2"/>
</dbReference>
<dbReference type="Antibodypedia" id="30420">
    <property type="antibodies" value="226 antibodies from 26 providers"/>
</dbReference>
<dbReference type="DNASU" id="57010"/>
<dbReference type="Ensembl" id="ENST00000325656.7">
    <molecule id="P57796-1"/>
    <property type="protein sequence ID" value="ENSP00000324960.5"/>
    <property type="gene ID" value="ENSG00000175544.14"/>
</dbReference>
<dbReference type="Ensembl" id="ENST00000438189.6">
    <molecule id="P57796-2"/>
    <property type="protein sequence ID" value="ENSP00000401555.2"/>
    <property type="gene ID" value="ENSG00000175544.14"/>
</dbReference>
<dbReference type="GeneID" id="57010"/>
<dbReference type="KEGG" id="hsa:57010"/>
<dbReference type="MANE-Select" id="ENST00000325656.7">
    <property type="protein sequence ID" value="ENSP00000324960.5"/>
    <property type="RefSeq nucleotide sequence ID" value="NM_145200.5"/>
    <property type="RefSeq protein sequence ID" value="NP_660201.1"/>
</dbReference>
<dbReference type="UCSC" id="uc001oln.4">
    <molecule id="P57796-1"/>
    <property type="organism name" value="human"/>
</dbReference>
<dbReference type="AGR" id="HGNC:1386"/>
<dbReference type="CTD" id="57010"/>
<dbReference type="DisGeNET" id="57010"/>
<dbReference type="GeneCards" id="CABP4"/>
<dbReference type="GeneReviews" id="CABP4"/>
<dbReference type="HGNC" id="HGNC:1386">
    <property type="gene designation" value="CABP4"/>
</dbReference>
<dbReference type="HPA" id="ENSG00000175544">
    <property type="expression patterns" value="Tissue enriched (retina)"/>
</dbReference>
<dbReference type="MalaCards" id="CABP4"/>
<dbReference type="MIM" id="608965">
    <property type="type" value="gene"/>
</dbReference>
<dbReference type="MIM" id="610427">
    <property type="type" value="phenotype"/>
</dbReference>
<dbReference type="neXtProt" id="NX_P57796"/>
<dbReference type="OpenTargets" id="ENSG00000175544"/>
<dbReference type="Orphanet" id="215">
    <property type="disease" value="Congenital stationary night blindness"/>
</dbReference>
<dbReference type="Orphanet" id="98784">
    <property type="disease" value="Sleep-related hypermotor epilepsy"/>
</dbReference>
<dbReference type="PharmGKB" id="PA26003"/>
<dbReference type="VEuPathDB" id="HostDB:ENSG00000175544"/>
<dbReference type="eggNOG" id="KOG0027">
    <property type="taxonomic scope" value="Eukaryota"/>
</dbReference>
<dbReference type="GeneTree" id="ENSGT00940000161468"/>
<dbReference type="HOGENOM" id="CLU_061288_2_2_1"/>
<dbReference type="InParanoid" id="P57796"/>
<dbReference type="OMA" id="EQTPIQG"/>
<dbReference type="OrthoDB" id="26525at2759"/>
<dbReference type="PAN-GO" id="P57796">
    <property type="GO annotations" value="4 GO annotations based on evolutionary models"/>
</dbReference>
<dbReference type="PhylomeDB" id="P57796"/>
<dbReference type="TreeFam" id="TF334804"/>
<dbReference type="PathwayCommons" id="P57796"/>
<dbReference type="BioGRID-ORCS" id="57010">
    <property type="hits" value="41 hits in 1143 CRISPR screens"/>
</dbReference>
<dbReference type="ChiTaRS" id="CABP4">
    <property type="organism name" value="human"/>
</dbReference>
<dbReference type="GenomeRNAi" id="57010"/>
<dbReference type="Pharos" id="P57796">
    <property type="development level" value="Tbio"/>
</dbReference>
<dbReference type="PRO" id="PR:P57796"/>
<dbReference type="Proteomes" id="UP000005640">
    <property type="component" value="Chromosome 11"/>
</dbReference>
<dbReference type="RNAct" id="P57796">
    <property type="molecule type" value="protein"/>
</dbReference>
<dbReference type="Bgee" id="ENSG00000175544">
    <property type="expression patterns" value="Expressed in vena cava and 179 other cell types or tissues"/>
</dbReference>
<dbReference type="ExpressionAtlas" id="P57796">
    <property type="expression patterns" value="baseline and differential"/>
</dbReference>
<dbReference type="GO" id="GO:0005737">
    <property type="term" value="C:cytoplasm"/>
    <property type="evidence" value="ECO:0000318"/>
    <property type="project" value="GO_Central"/>
</dbReference>
<dbReference type="GO" id="GO:0005829">
    <property type="term" value="C:cytosol"/>
    <property type="evidence" value="ECO:0000314"/>
    <property type="project" value="MGI"/>
</dbReference>
<dbReference type="GO" id="GO:0005576">
    <property type="term" value="C:extracellular region"/>
    <property type="evidence" value="ECO:0000303"/>
    <property type="project" value="UniProtKB"/>
</dbReference>
<dbReference type="GO" id="GO:0045202">
    <property type="term" value="C:synapse"/>
    <property type="evidence" value="ECO:0000304"/>
    <property type="project" value="UniProtKB"/>
</dbReference>
<dbReference type="GO" id="GO:0043195">
    <property type="term" value="C:terminal bouton"/>
    <property type="evidence" value="ECO:0000304"/>
    <property type="project" value="UniProtKB"/>
</dbReference>
<dbReference type="GO" id="GO:0005246">
    <property type="term" value="F:calcium channel regulator activity"/>
    <property type="evidence" value="ECO:0000318"/>
    <property type="project" value="GO_Central"/>
</dbReference>
<dbReference type="GO" id="GO:0005509">
    <property type="term" value="F:calcium ion binding"/>
    <property type="evidence" value="ECO:0000304"/>
    <property type="project" value="UniProtKB"/>
</dbReference>
<dbReference type="GO" id="GO:0044325">
    <property type="term" value="F:transmembrane transporter binding"/>
    <property type="evidence" value="ECO:0000353"/>
    <property type="project" value="UniProtKB"/>
</dbReference>
<dbReference type="GO" id="GO:0008594">
    <property type="term" value="P:photoreceptor cell morphogenesis"/>
    <property type="evidence" value="ECO:0007669"/>
    <property type="project" value="Ensembl"/>
</dbReference>
<dbReference type="GO" id="GO:0007602">
    <property type="term" value="P:phototransduction"/>
    <property type="evidence" value="ECO:0007669"/>
    <property type="project" value="Ensembl"/>
</dbReference>
<dbReference type="GO" id="GO:0060040">
    <property type="term" value="P:retinal bipolar neuron differentiation"/>
    <property type="evidence" value="ECO:0007669"/>
    <property type="project" value="Ensembl"/>
</dbReference>
<dbReference type="GO" id="GO:0046549">
    <property type="term" value="P:retinal cone cell development"/>
    <property type="evidence" value="ECO:0007669"/>
    <property type="project" value="Ensembl"/>
</dbReference>
<dbReference type="GO" id="GO:0007165">
    <property type="term" value="P:signal transduction"/>
    <property type="evidence" value="ECO:0000303"/>
    <property type="project" value="UniProtKB"/>
</dbReference>
<dbReference type="GO" id="GO:0007601">
    <property type="term" value="P:visual perception"/>
    <property type="evidence" value="ECO:0000315"/>
    <property type="project" value="UniProtKB"/>
</dbReference>
<dbReference type="CDD" id="cd00051">
    <property type="entry name" value="EFh"/>
    <property type="match status" value="1"/>
</dbReference>
<dbReference type="FunFam" id="1.10.238.10:FF:000037">
    <property type="entry name" value="calcium-binding protein 1 isoform X2"/>
    <property type="match status" value="1"/>
</dbReference>
<dbReference type="FunFam" id="1.10.238.10:FF:000265">
    <property type="entry name" value="calcium-binding protein 4"/>
    <property type="match status" value="1"/>
</dbReference>
<dbReference type="Gene3D" id="1.10.238.10">
    <property type="entry name" value="EF-hand"/>
    <property type="match status" value="2"/>
</dbReference>
<dbReference type="InterPro" id="IPR043582">
    <property type="entry name" value="CaBP1/2/4/5"/>
</dbReference>
<dbReference type="InterPro" id="IPR011992">
    <property type="entry name" value="EF-hand-dom_pair"/>
</dbReference>
<dbReference type="InterPro" id="IPR018247">
    <property type="entry name" value="EF_Hand_1_Ca_BS"/>
</dbReference>
<dbReference type="InterPro" id="IPR002048">
    <property type="entry name" value="EF_hand_dom"/>
</dbReference>
<dbReference type="PANTHER" id="PTHR45917">
    <property type="entry name" value="CALCIUM-BINDING PROTEIN 1-RELATED"/>
    <property type="match status" value="1"/>
</dbReference>
<dbReference type="PANTHER" id="PTHR45917:SF4">
    <property type="entry name" value="CALCIUM-BINDING PROTEIN 4"/>
    <property type="match status" value="1"/>
</dbReference>
<dbReference type="Pfam" id="PF00036">
    <property type="entry name" value="EF-hand_1"/>
    <property type="match status" value="1"/>
</dbReference>
<dbReference type="Pfam" id="PF13499">
    <property type="entry name" value="EF-hand_7"/>
    <property type="match status" value="1"/>
</dbReference>
<dbReference type="SMART" id="SM00054">
    <property type="entry name" value="EFh"/>
    <property type="match status" value="3"/>
</dbReference>
<dbReference type="SUPFAM" id="SSF47473">
    <property type="entry name" value="EF-hand"/>
    <property type="match status" value="1"/>
</dbReference>
<dbReference type="PROSITE" id="PS00018">
    <property type="entry name" value="EF_HAND_1"/>
    <property type="match status" value="3"/>
</dbReference>
<dbReference type="PROSITE" id="PS50222">
    <property type="entry name" value="EF_HAND_2"/>
    <property type="match status" value="4"/>
</dbReference>
<keyword id="KW-0025">Alternative splicing</keyword>
<keyword id="KW-0106">Calcium</keyword>
<keyword id="KW-0966">Cell projection</keyword>
<keyword id="KW-0963">Cytoplasm</keyword>
<keyword id="KW-0225">Disease variant</keyword>
<keyword id="KW-0479">Metal-binding</keyword>
<keyword id="KW-0597">Phosphoprotein</keyword>
<keyword id="KW-1267">Proteomics identification</keyword>
<keyword id="KW-1185">Reference proteome</keyword>
<keyword id="KW-0677">Repeat</keyword>
<keyword id="KW-0770">Synapse</keyword>
<evidence type="ECO:0000250" key="1"/>
<evidence type="ECO:0000250" key="2">
    <source>
        <dbReference type="UniProtKB" id="Q8VHC5"/>
    </source>
</evidence>
<evidence type="ECO:0000255" key="3">
    <source>
        <dbReference type="PROSITE-ProRule" id="PRU00448"/>
    </source>
</evidence>
<evidence type="ECO:0000256" key="4">
    <source>
        <dbReference type="SAM" id="MobiDB-lite"/>
    </source>
</evidence>
<evidence type="ECO:0000269" key="5">
    <source>
    </source>
</evidence>
<evidence type="ECO:0000269" key="6">
    <source>
    </source>
</evidence>
<evidence type="ECO:0000303" key="7">
    <source>
    </source>
</evidence>